<sequence length="327" mass="36612">MEAIKGSDVNVPDAVFAWMLDGRGGVKPLENTDVIDEAHPCWLHLNYVHHDSAQWLATTPLLPNNVRDALAGESTRPRVSRLGEGTLITLRCINGSTDERPDQLVAMRVYMDGRLIVSTRQRKVLALDDVVSDLEEGTGPTDCGGWLVDVCDALTDHSSEFIEQLHDKIIDLEDNLLDQQIPPRGFLALLRKQLIVMRRYMAPQRDVYARLASERLPWMSDDQRRRMQDIADRLGRGLDEIDACIARTGVMADEIAQVMQENLARRTYTMSLMAMVFLPSTFLTGLFGVNLGGIPGGGWQFGFSIFCILLVVLIGGVALWLHRSKWL</sequence>
<evidence type="ECO:0000255" key="1">
    <source>
        <dbReference type="HAMAP-Rule" id="MF_01565"/>
    </source>
</evidence>
<comment type="function">
    <text evidence="1">Zinc transporter. Acts as a Zn(2+):proton symporter, which likely mediates zinc ion uptake.</text>
</comment>
<comment type="catalytic activity">
    <reaction evidence="1">
        <text>Zn(2+)(out) + H(+)(out) = Zn(2+)(in) + H(+)(in)</text>
        <dbReference type="Rhea" id="RHEA:71195"/>
        <dbReference type="ChEBI" id="CHEBI:15378"/>
        <dbReference type="ChEBI" id="CHEBI:29105"/>
    </reaction>
    <physiologicalReaction direction="left-to-right" evidence="1">
        <dbReference type="Rhea" id="RHEA:71196"/>
    </physiologicalReaction>
</comment>
<comment type="subcellular location">
    <subcellularLocation>
        <location evidence="1">Cell inner membrane</location>
        <topology evidence="1">Multi-pass membrane protein</topology>
    </subcellularLocation>
</comment>
<comment type="similarity">
    <text evidence="1">Belongs to the CorA metal ion transporter (MIT) (TC 1.A.35) family.</text>
</comment>
<accession>Q320D7</accession>
<gene>
    <name evidence="1" type="primary">zntB</name>
    <name type="ordered locus">SBO_1719</name>
</gene>
<dbReference type="EMBL" id="CP000036">
    <property type="protein sequence ID" value="ABB66321.1"/>
    <property type="molecule type" value="Genomic_DNA"/>
</dbReference>
<dbReference type="RefSeq" id="WP_000387388.1">
    <property type="nucleotide sequence ID" value="NC_007613.1"/>
</dbReference>
<dbReference type="SMR" id="Q320D7"/>
<dbReference type="GeneID" id="93775479"/>
<dbReference type="KEGG" id="sbo:SBO_1719"/>
<dbReference type="HOGENOM" id="CLU_007127_2_0_6"/>
<dbReference type="Proteomes" id="UP000007067">
    <property type="component" value="Chromosome"/>
</dbReference>
<dbReference type="GO" id="GO:0005886">
    <property type="term" value="C:plasma membrane"/>
    <property type="evidence" value="ECO:0007669"/>
    <property type="project" value="UniProtKB-SubCell"/>
</dbReference>
<dbReference type="GO" id="GO:0050897">
    <property type="term" value="F:cobalt ion binding"/>
    <property type="evidence" value="ECO:0007669"/>
    <property type="project" value="TreeGrafter"/>
</dbReference>
<dbReference type="GO" id="GO:0015087">
    <property type="term" value="F:cobalt ion transmembrane transporter activity"/>
    <property type="evidence" value="ECO:0007669"/>
    <property type="project" value="TreeGrafter"/>
</dbReference>
<dbReference type="GO" id="GO:0000287">
    <property type="term" value="F:magnesium ion binding"/>
    <property type="evidence" value="ECO:0007669"/>
    <property type="project" value="TreeGrafter"/>
</dbReference>
<dbReference type="GO" id="GO:0015095">
    <property type="term" value="F:magnesium ion transmembrane transporter activity"/>
    <property type="evidence" value="ECO:0007669"/>
    <property type="project" value="TreeGrafter"/>
</dbReference>
<dbReference type="GO" id="GO:0005385">
    <property type="term" value="F:zinc ion transmembrane transporter activity"/>
    <property type="evidence" value="ECO:0007669"/>
    <property type="project" value="UniProtKB-UniRule"/>
</dbReference>
<dbReference type="CDD" id="cd12833">
    <property type="entry name" value="ZntB-like_1"/>
    <property type="match status" value="1"/>
</dbReference>
<dbReference type="FunFam" id="1.20.58.340:FF:000002">
    <property type="entry name" value="Zinc transport protein ZntB"/>
    <property type="match status" value="1"/>
</dbReference>
<dbReference type="FunFam" id="1.20.58.340:FF:000003">
    <property type="entry name" value="Zinc transport protein ZntB"/>
    <property type="match status" value="1"/>
</dbReference>
<dbReference type="FunFam" id="3.30.460.20:FF:000001">
    <property type="entry name" value="Zinc transport protein ZntB"/>
    <property type="match status" value="1"/>
</dbReference>
<dbReference type="Gene3D" id="3.30.460.20">
    <property type="entry name" value="CorA soluble domain-like"/>
    <property type="match status" value="1"/>
</dbReference>
<dbReference type="Gene3D" id="1.20.58.340">
    <property type="entry name" value="Magnesium transport protein CorA, transmembrane region"/>
    <property type="match status" value="2"/>
</dbReference>
<dbReference type="HAMAP" id="MF_01565">
    <property type="entry name" value="ZntB"/>
    <property type="match status" value="1"/>
</dbReference>
<dbReference type="InterPro" id="IPR045861">
    <property type="entry name" value="CorA_cytoplasmic_dom"/>
</dbReference>
<dbReference type="InterPro" id="IPR045863">
    <property type="entry name" value="CorA_TM1_TM2"/>
</dbReference>
<dbReference type="InterPro" id="IPR002523">
    <property type="entry name" value="MgTranspt_CorA/ZnTranspt_ZntB"/>
</dbReference>
<dbReference type="InterPro" id="IPR023714">
    <property type="entry name" value="Zn_transp_ZntB"/>
</dbReference>
<dbReference type="NCBIfam" id="NF007092">
    <property type="entry name" value="PRK09546.1"/>
    <property type="match status" value="1"/>
</dbReference>
<dbReference type="PANTHER" id="PTHR46494">
    <property type="entry name" value="CORA FAMILY METAL ION TRANSPORTER (EUROFUNG)"/>
    <property type="match status" value="1"/>
</dbReference>
<dbReference type="PANTHER" id="PTHR46494:SF3">
    <property type="entry name" value="ZINC TRANSPORT PROTEIN ZNTB"/>
    <property type="match status" value="1"/>
</dbReference>
<dbReference type="Pfam" id="PF01544">
    <property type="entry name" value="CorA"/>
    <property type="match status" value="1"/>
</dbReference>
<dbReference type="SUPFAM" id="SSF143865">
    <property type="entry name" value="CorA soluble domain-like"/>
    <property type="match status" value="1"/>
</dbReference>
<dbReference type="SUPFAM" id="SSF144083">
    <property type="entry name" value="Magnesium transport protein CorA, transmembrane region"/>
    <property type="match status" value="1"/>
</dbReference>
<feature type="chain" id="PRO_0000239248" description="Zinc transport protein ZntB">
    <location>
        <begin position="1"/>
        <end position="327"/>
    </location>
</feature>
<feature type="topological domain" description="Cytoplasmic" evidence="1">
    <location>
        <begin position="1"/>
        <end position="273"/>
    </location>
</feature>
<feature type="transmembrane region" description="Helical" evidence="1">
    <location>
        <begin position="274"/>
        <end position="294"/>
    </location>
</feature>
<feature type="topological domain" description="Periplasmic" evidence="1">
    <location>
        <begin position="295"/>
        <end position="300"/>
    </location>
</feature>
<feature type="transmembrane region" description="Helical" evidence="1">
    <location>
        <begin position="301"/>
        <end position="321"/>
    </location>
</feature>
<feature type="topological domain" description="Cytoplasmic" evidence="1">
    <location>
        <begin position="322"/>
        <end position="327"/>
    </location>
</feature>
<proteinExistence type="inferred from homology"/>
<organism>
    <name type="scientific">Shigella boydii serotype 4 (strain Sb227)</name>
    <dbReference type="NCBI Taxonomy" id="300268"/>
    <lineage>
        <taxon>Bacteria</taxon>
        <taxon>Pseudomonadati</taxon>
        <taxon>Pseudomonadota</taxon>
        <taxon>Gammaproteobacteria</taxon>
        <taxon>Enterobacterales</taxon>
        <taxon>Enterobacteriaceae</taxon>
        <taxon>Shigella</taxon>
    </lineage>
</organism>
<name>ZNTB_SHIBS</name>
<reference key="1">
    <citation type="journal article" date="2005" name="Nucleic Acids Res.">
        <title>Genome dynamics and diversity of Shigella species, the etiologic agents of bacillary dysentery.</title>
        <authorList>
            <person name="Yang F."/>
            <person name="Yang J."/>
            <person name="Zhang X."/>
            <person name="Chen L."/>
            <person name="Jiang Y."/>
            <person name="Yan Y."/>
            <person name="Tang X."/>
            <person name="Wang J."/>
            <person name="Xiong Z."/>
            <person name="Dong J."/>
            <person name="Xue Y."/>
            <person name="Zhu Y."/>
            <person name="Xu X."/>
            <person name="Sun L."/>
            <person name="Chen S."/>
            <person name="Nie H."/>
            <person name="Peng J."/>
            <person name="Xu J."/>
            <person name="Wang Y."/>
            <person name="Yuan Z."/>
            <person name="Wen Y."/>
            <person name="Yao Z."/>
            <person name="Shen Y."/>
            <person name="Qiang B."/>
            <person name="Hou Y."/>
            <person name="Yu J."/>
            <person name="Jin Q."/>
        </authorList>
    </citation>
    <scope>NUCLEOTIDE SEQUENCE [LARGE SCALE GENOMIC DNA]</scope>
    <source>
        <strain>Sb227</strain>
    </source>
</reference>
<keyword id="KW-0997">Cell inner membrane</keyword>
<keyword id="KW-1003">Cell membrane</keyword>
<keyword id="KW-0406">Ion transport</keyword>
<keyword id="KW-0472">Membrane</keyword>
<keyword id="KW-0812">Transmembrane</keyword>
<keyword id="KW-1133">Transmembrane helix</keyword>
<keyword id="KW-0813">Transport</keyword>
<keyword id="KW-0862">Zinc</keyword>
<protein>
    <recommendedName>
        <fullName evidence="1">Zinc transport protein ZntB</fullName>
    </recommendedName>
</protein>